<name>RABJ_DICDI</name>
<evidence type="ECO:0000250" key="1"/>
<evidence type="ECO:0000256" key="2">
    <source>
        <dbReference type="SAM" id="MobiDB-lite"/>
    </source>
</evidence>
<evidence type="ECO:0000305" key="3"/>
<dbReference type="EMBL" id="AAFI02000020">
    <property type="protein sequence ID" value="EAL68683.1"/>
    <property type="molecule type" value="Genomic_DNA"/>
</dbReference>
<dbReference type="RefSeq" id="XP_642644.1">
    <property type="nucleotide sequence ID" value="XM_637552.1"/>
</dbReference>
<dbReference type="SMR" id="Q8MYF2"/>
<dbReference type="STRING" id="44689.Q8MYF2"/>
<dbReference type="PaxDb" id="44689-DDB0229403"/>
<dbReference type="EnsemblProtists" id="EAL68683">
    <property type="protein sequence ID" value="EAL68683"/>
    <property type="gene ID" value="DDB_G0277441"/>
</dbReference>
<dbReference type="GeneID" id="8621060"/>
<dbReference type="KEGG" id="ddi:DDB_G0277441"/>
<dbReference type="dictyBase" id="DDB_G0277441">
    <property type="gene designation" value="rabJ"/>
</dbReference>
<dbReference type="VEuPathDB" id="AmoebaDB:DDB_G0277441"/>
<dbReference type="eggNOG" id="KOG0092">
    <property type="taxonomic scope" value="Eukaryota"/>
</dbReference>
<dbReference type="HOGENOM" id="CLU_041217_10_2_1"/>
<dbReference type="InParanoid" id="Q8MYF2"/>
<dbReference type="OMA" id="KQDTFHT"/>
<dbReference type="PhylomeDB" id="Q8MYF2"/>
<dbReference type="PRO" id="PR:Q8MYF2"/>
<dbReference type="Proteomes" id="UP000002195">
    <property type="component" value="Chromosome 2"/>
</dbReference>
<dbReference type="GO" id="GO:0012505">
    <property type="term" value="C:endomembrane system"/>
    <property type="evidence" value="ECO:0000318"/>
    <property type="project" value="GO_Central"/>
</dbReference>
<dbReference type="GO" id="GO:0005886">
    <property type="term" value="C:plasma membrane"/>
    <property type="evidence" value="ECO:0007669"/>
    <property type="project" value="UniProtKB-SubCell"/>
</dbReference>
<dbReference type="GO" id="GO:0005525">
    <property type="term" value="F:GTP binding"/>
    <property type="evidence" value="ECO:0007669"/>
    <property type="project" value="UniProtKB-KW"/>
</dbReference>
<dbReference type="GO" id="GO:0003924">
    <property type="term" value="F:GTPase activity"/>
    <property type="evidence" value="ECO:0000318"/>
    <property type="project" value="GO_Central"/>
</dbReference>
<dbReference type="GO" id="GO:0006897">
    <property type="term" value="P:endocytosis"/>
    <property type="evidence" value="ECO:0000318"/>
    <property type="project" value="GO_Central"/>
</dbReference>
<dbReference type="GO" id="GO:0006886">
    <property type="term" value="P:intracellular protein transport"/>
    <property type="evidence" value="ECO:0000318"/>
    <property type="project" value="GO_Central"/>
</dbReference>
<dbReference type="FunFam" id="3.40.50.300:FF:004294">
    <property type="entry name" value="Rab-type small G protein"/>
    <property type="match status" value="1"/>
</dbReference>
<dbReference type="Gene3D" id="3.40.50.300">
    <property type="entry name" value="P-loop containing nucleotide triphosphate hydrolases"/>
    <property type="match status" value="1"/>
</dbReference>
<dbReference type="InterPro" id="IPR027417">
    <property type="entry name" value="P-loop_NTPase"/>
</dbReference>
<dbReference type="InterPro" id="IPR005225">
    <property type="entry name" value="Small_GTP-bd"/>
</dbReference>
<dbReference type="InterPro" id="IPR001806">
    <property type="entry name" value="Small_GTPase"/>
</dbReference>
<dbReference type="NCBIfam" id="TIGR00231">
    <property type="entry name" value="small_GTP"/>
    <property type="match status" value="1"/>
</dbReference>
<dbReference type="PANTHER" id="PTHR47978">
    <property type="match status" value="1"/>
</dbReference>
<dbReference type="Pfam" id="PF00071">
    <property type="entry name" value="Ras"/>
    <property type="match status" value="1"/>
</dbReference>
<dbReference type="PRINTS" id="PR00449">
    <property type="entry name" value="RASTRNSFRMNG"/>
</dbReference>
<dbReference type="SMART" id="SM00175">
    <property type="entry name" value="RAB"/>
    <property type="match status" value="1"/>
</dbReference>
<dbReference type="SMART" id="SM00176">
    <property type="entry name" value="RAN"/>
    <property type="match status" value="1"/>
</dbReference>
<dbReference type="SMART" id="SM00173">
    <property type="entry name" value="RAS"/>
    <property type="match status" value="1"/>
</dbReference>
<dbReference type="SMART" id="SM00174">
    <property type="entry name" value="RHO"/>
    <property type="match status" value="1"/>
</dbReference>
<dbReference type="SUPFAM" id="SSF52540">
    <property type="entry name" value="P-loop containing nucleoside triphosphate hydrolases"/>
    <property type="match status" value="1"/>
</dbReference>
<dbReference type="PROSITE" id="PS51419">
    <property type="entry name" value="RAB"/>
    <property type="match status" value="1"/>
</dbReference>
<sequence>MDPLSISMESKVVLLGSSDVGKTALSLRYVDGIFPKRLTSTIGASFLTRTINIEGNKIKYLIWDSAGQDRFRSLATLYYRGACVAILVFDITQQKTFDIVKGWVEELKANIQEEIIMVLCGNKIDLEQNRQVKSETAKLYADEINAMYVETSAKENEGVEGMFLEIGKKLILNKHNEYFKQFQQQQKLHKQFQQQNQSLYQYHIQQQKHQQQQQQQQQQIFKNQQFYNNGHLQGSINGHNNQNSTNYSDNSDQCCG</sequence>
<feature type="chain" id="PRO_0000332756" description="Ras-related protein RabJ">
    <location>
        <begin position="1"/>
        <end position="256"/>
    </location>
</feature>
<feature type="region of interest" description="Disordered" evidence="2">
    <location>
        <begin position="229"/>
        <end position="256"/>
    </location>
</feature>
<feature type="short sequence motif" description="Effector region" evidence="1">
    <location>
        <begin position="38"/>
        <end position="46"/>
    </location>
</feature>
<feature type="compositionally biased region" description="Polar residues" evidence="2">
    <location>
        <begin position="230"/>
        <end position="256"/>
    </location>
</feature>
<feature type="binding site" evidence="1">
    <location>
        <begin position="16"/>
        <end position="23"/>
    </location>
    <ligand>
        <name>GTP</name>
        <dbReference type="ChEBI" id="CHEBI:37565"/>
    </ligand>
</feature>
<feature type="binding site" evidence="1">
    <location>
        <begin position="64"/>
        <end position="68"/>
    </location>
    <ligand>
        <name>GTP</name>
        <dbReference type="ChEBI" id="CHEBI:37565"/>
    </ligand>
</feature>
<feature type="binding site" evidence="1">
    <location>
        <begin position="122"/>
        <end position="125"/>
    </location>
    <ligand>
        <name>GTP</name>
        <dbReference type="ChEBI" id="CHEBI:37565"/>
    </ligand>
</feature>
<feature type="lipid moiety-binding region" description="S-geranylgeranyl cysteine" evidence="1">
    <location>
        <position position="254"/>
    </location>
</feature>
<feature type="lipid moiety-binding region" description="S-geranylgeranyl cysteine" evidence="1">
    <location>
        <position position="255"/>
    </location>
</feature>
<accession>Q8MYF2</accession>
<accession>Q54ZJ8</accession>
<comment type="subcellular location">
    <subcellularLocation>
        <location evidence="3">Cell membrane</location>
        <topology evidence="3">Lipid-anchor</topology>
        <orientation evidence="3">Cytoplasmic side</orientation>
    </subcellularLocation>
</comment>
<comment type="similarity">
    <text evidence="3">Belongs to the small GTPase superfamily. Rab family.</text>
</comment>
<keyword id="KW-1003">Cell membrane</keyword>
<keyword id="KW-0342">GTP-binding</keyword>
<keyword id="KW-0449">Lipoprotein</keyword>
<keyword id="KW-0472">Membrane</keyword>
<keyword id="KW-0547">Nucleotide-binding</keyword>
<keyword id="KW-0636">Prenylation</keyword>
<keyword id="KW-1185">Reference proteome</keyword>
<organism>
    <name type="scientific">Dictyostelium discoideum</name>
    <name type="common">Social amoeba</name>
    <dbReference type="NCBI Taxonomy" id="44689"/>
    <lineage>
        <taxon>Eukaryota</taxon>
        <taxon>Amoebozoa</taxon>
        <taxon>Evosea</taxon>
        <taxon>Eumycetozoa</taxon>
        <taxon>Dictyostelia</taxon>
        <taxon>Dictyosteliales</taxon>
        <taxon>Dictyosteliaceae</taxon>
        <taxon>Dictyostelium</taxon>
    </lineage>
</organism>
<gene>
    <name type="primary">rabJ</name>
    <name type="ORF">DDB_G0277441</name>
</gene>
<protein>
    <recommendedName>
        <fullName>Ras-related protein RabJ</fullName>
    </recommendedName>
</protein>
<proteinExistence type="inferred from homology"/>
<reference key="1">
    <citation type="journal article" date="2002" name="Nature">
        <title>Sequence and analysis of chromosome 2 of Dictyostelium discoideum.</title>
        <authorList>
            <person name="Gloeckner G."/>
            <person name="Eichinger L."/>
            <person name="Szafranski K."/>
            <person name="Pachebat J.A."/>
            <person name="Bankier A.T."/>
            <person name="Dear P.H."/>
            <person name="Lehmann R."/>
            <person name="Baumgart C."/>
            <person name="Parra G."/>
            <person name="Abril J.F."/>
            <person name="Guigo R."/>
            <person name="Kumpf K."/>
            <person name="Tunggal B."/>
            <person name="Cox E.C."/>
            <person name="Quail M.A."/>
            <person name="Platzer M."/>
            <person name="Rosenthal A."/>
            <person name="Noegel A.A."/>
        </authorList>
    </citation>
    <scope>NUCLEOTIDE SEQUENCE [LARGE SCALE GENOMIC DNA]</scope>
    <source>
        <strain>AX4</strain>
    </source>
</reference>
<reference key="2">
    <citation type="journal article" date="2005" name="Nature">
        <title>The genome of the social amoeba Dictyostelium discoideum.</title>
        <authorList>
            <person name="Eichinger L."/>
            <person name="Pachebat J.A."/>
            <person name="Gloeckner G."/>
            <person name="Rajandream M.A."/>
            <person name="Sucgang R."/>
            <person name="Berriman M."/>
            <person name="Song J."/>
            <person name="Olsen R."/>
            <person name="Szafranski K."/>
            <person name="Xu Q."/>
            <person name="Tunggal B."/>
            <person name="Kummerfeld S."/>
            <person name="Madera M."/>
            <person name="Konfortov B.A."/>
            <person name="Rivero F."/>
            <person name="Bankier A.T."/>
            <person name="Lehmann R."/>
            <person name="Hamlin N."/>
            <person name="Davies R."/>
            <person name="Gaudet P."/>
            <person name="Fey P."/>
            <person name="Pilcher K."/>
            <person name="Chen G."/>
            <person name="Saunders D."/>
            <person name="Sodergren E.J."/>
            <person name="Davis P."/>
            <person name="Kerhornou A."/>
            <person name="Nie X."/>
            <person name="Hall N."/>
            <person name="Anjard C."/>
            <person name="Hemphill L."/>
            <person name="Bason N."/>
            <person name="Farbrother P."/>
            <person name="Desany B."/>
            <person name="Just E."/>
            <person name="Morio T."/>
            <person name="Rost R."/>
            <person name="Churcher C.M."/>
            <person name="Cooper J."/>
            <person name="Haydock S."/>
            <person name="van Driessche N."/>
            <person name="Cronin A."/>
            <person name="Goodhead I."/>
            <person name="Muzny D.M."/>
            <person name="Mourier T."/>
            <person name="Pain A."/>
            <person name="Lu M."/>
            <person name="Harper D."/>
            <person name="Lindsay R."/>
            <person name="Hauser H."/>
            <person name="James K.D."/>
            <person name="Quiles M."/>
            <person name="Madan Babu M."/>
            <person name="Saito T."/>
            <person name="Buchrieser C."/>
            <person name="Wardroper A."/>
            <person name="Felder M."/>
            <person name="Thangavelu M."/>
            <person name="Johnson D."/>
            <person name="Knights A."/>
            <person name="Loulseged H."/>
            <person name="Mungall K.L."/>
            <person name="Oliver K."/>
            <person name="Price C."/>
            <person name="Quail M.A."/>
            <person name="Urushihara H."/>
            <person name="Hernandez J."/>
            <person name="Rabbinowitsch E."/>
            <person name="Steffen D."/>
            <person name="Sanders M."/>
            <person name="Ma J."/>
            <person name="Kohara Y."/>
            <person name="Sharp S."/>
            <person name="Simmonds M.N."/>
            <person name="Spiegler S."/>
            <person name="Tivey A."/>
            <person name="Sugano S."/>
            <person name="White B."/>
            <person name="Walker D."/>
            <person name="Woodward J.R."/>
            <person name="Winckler T."/>
            <person name="Tanaka Y."/>
            <person name="Shaulsky G."/>
            <person name="Schleicher M."/>
            <person name="Weinstock G.M."/>
            <person name="Rosenthal A."/>
            <person name="Cox E.C."/>
            <person name="Chisholm R.L."/>
            <person name="Gibbs R.A."/>
            <person name="Loomis W.F."/>
            <person name="Platzer M."/>
            <person name="Kay R.R."/>
            <person name="Williams J.G."/>
            <person name="Dear P.H."/>
            <person name="Noegel A.A."/>
            <person name="Barrell B.G."/>
            <person name="Kuspa A."/>
        </authorList>
    </citation>
    <scope>NUCLEOTIDE SEQUENCE [LARGE SCALE GENOMIC DNA]</scope>
    <source>
        <strain>AX4</strain>
    </source>
</reference>